<reference key="1">
    <citation type="journal article" date="2007" name="J. Bacteriol.">
        <title>The genome sequence of avian pathogenic Escherichia coli strain O1:K1:H7 shares strong similarities with human extraintestinal pathogenic E. coli genomes.</title>
        <authorList>
            <person name="Johnson T.J."/>
            <person name="Kariyawasam S."/>
            <person name="Wannemuehler Y."/>
            <person name="Mangiamele P."/>
            <person name="Johnson S.J."/>
            <person name="Doetkott C."/>
            <person name="Skyberg J.A."/>
            <person name="Lynne A.M."/>
            <person name="Johnson J.R."/>
            <person name="Nolan L.K."/>
        </authorList>
    </citation>
    <scope>NUCLEOTIDE SEQUENCE [LARGE SCALE GENOMIC DNA]</scope>
</reference>
<proteinExistence type="inferred from homology"/>
<evidence type="ECO:0000255" key="1">
    <source>
        <dbReference type="HAMAP-Rule" id="MF_00274"/>
    </source>
</evidence>
<protein>
    <recommendedName>
        <fullName evidence="1">Nucleoid-associated protein YbaB</fullName>
    </recommendedName>
</protein>
<name>YBAB_ECOK1</name>
<dbReference type="EMBL" id="CP000468">
    <property type="protein sequence ID" value="ABI99926.1"/>
    <property type="molecule type" value="Genomic_DNA"/>
</dbReference>
<dbReference type="RefSeq" id="WP_000467098.1">
    <property type="nucleotide sequence ID" value="NZ_CADILS010000009.1"/>
</dbReference>
<dbReference type="SMR" id="A1A8D7"/>
<dbReference type="KEGG" id="ecv:APECO1_1544"/>
<dbReference type="HOGENOM" id="CLU_140930_0_0_6"/>
<dbReference type="Proteomes" id="UP000008216">
    <property type="component" value="Chromosome"/>
</dbReference>
<dbReference type="GO" id="GO:0043590">
    <property type="term" value="C:bacterial nucleoid"/>
    <property type="evidence" value="ECO:0007669"/>
    <property type="project" value="UniProtKB-UniRule"/>
</dbReference>
<dbReference type="GO" id="GO:0005829">
    <property type="term" value="C:cytosol"/>
    <property type="evidence" value="ECO:0007669"/>
    <property type="project" value="TreeGrafter"/>
</dbReference>
<dbReference type="GO" id="GO:0003677">
    <property type="term" value="F:DNA binding"/>
    <property type="evidence" value="ECO:0007669"/>
    <property type="project" value="UniProtKB-UniRule"/>
</dbReference>
<dbReference type="FunFam" id="3.30.1310.10:FF:000001">
    <property type="entry name" value="Nucleoid-associated protein YbaB"/>
    <property type="match status" value="1"/>
</dbReference>
<dbReference type="Gene3D" id="3.30.1310.10">
    <property type="entry name" value="Nucleoid-associated protein YbaB-like domain"/>
    <property type="match status" value="1"/>
</dbReference>
<dbReference type="HAMAP" id="MF_00274">
    <property type="entry name" value="DNA_YbaB_EbfC"/>
    <property type="match status" value="1"/>
</dbReference>
<dbReference type="InterPro" id="IPR036894">
    <property type="entry name" value="YbaB-like_sf"/>
</dbReference>
<dbReference type="InterPro" id="IPR004401">
    <property type="entry name" value="YbaB/EbfC"/>
</dbReference>
<dbReference type="NCBIfam" id="TIGR00103">
    <property type="entry name" value="DNA_YbaB_EbfC"/>
    <property type="match status" value="1"/>
</dbReference>
<dbReference type="PANTHER" id="PTHR33449">
    <property type="entry name" value="NUCLEOID-ASSOCIATED PROTEIN YBAB"/>
    <property type="match status" value="1"/>
</dbReference>
<dbReference type="PANTHER" id="PTHR33449:SF1">
    <property type="entry name" value="NUCLEOID-ASSOCIATED PROTEIN YBAB"/>
    <property type="match status" value="1"/>
</dbReference>
<dbReference type="Pfam" id="PF02575">
    <property type="entry name" value="YbaB_DNA_bd"/>
    <property type="match status" value="1"/>
</dbReference>
<dbReference type="PIRSF" id="PIRSF004555">
    <property type="entry name" value="UCP004555"/>
    <property type="match status" value="1"/>
</dbReference>
<dbReference type="SUPFAM" id="SSF82607">
    <property type="entry name" value="YbaB-like"/>
    <property type="match status" value="1"/>
</dbReference>
<gene>
    <name evidence="1" type="primary">ybaB</name>
    <name type="ordered locus">Ecok1_04330</name>
    <name type="ORF">APECO1_1544</name>
</gene>
<organism>
    <name type="scientific">Escherichia coli O1:K1 / APEC</name>
    <dbReference type="NCBI Taxonomy" id="405955"/>
    <lineage>
        <taxon>Bacteria</taxon>
        <taxon>Pseudomonadati</taxon>
        <taxon>Pseudomonadota</taxon>
        <taxon>Gammaproteobacteria</taxon>
        <taxon>Enterobacterales</taxon>
        <taxon>Enterobacteriaceae</taxon>
        <taxon>Escherichia</taxon>
    </lineage>
</organism>
<accession>A1A8D7</accession>
<keyword id="KW-0963">Cytoplasm</keyword>
<keyword id="KW-0238">DNA-binding</keyword>
<keyword id="KW-1185">Reference proteome</keyword>
<feature type="chain" id="PRO_1000003738" description="Nucleoid-associated protein YbaB">
    <location>
        <begin position="1"/>
        <end position="109"/>
    </location>
</feature>
<comment type="function">
    <text evidence="1">Binds to DNA and alters its conformation. May be involved in regulation of gene expression, nucleoid organization and DNA protection.</text>
</comment>
<comment type="subunit">
    <text evidence="1">Homodimer.</text>
</comment>
<comment type="subcellular location">
    <subcellularLocation>
        <location evidence="1">Cytoplasm</location>
        <location evidence="1">Nucleoid</location>
    </subcellularLocation>
</comment>
<comment type="similarity">
    <text evidence="1">Belongs to the YbaB/EbfC family.</text>
</comment>
<sequence length="109" mass="12015">MFGKGGLGNLMKQAQQMQEKMQKMQEEIAQLEVTGESGAGLVKVTINGAHNCRRVEIDPSLLEDDKEMLEDLVAAAFNDAARRIEETQKEKMASVSSGMQLPPGFKMPF</sequence>